<gene>
    <name type="primary">rplT</name>
</gene>
<name>RL20_PSESY</name>
<keyword id="KW-0687">Ribonucleoprotein</keyword>
<keyword id="KW-0689">Ribosomal protein</keyword>
<keyword id="KW-0694">RNA-binding</keyword>
<keyword id="KW-0699">rRNA-binding</keyword>
<proteinExistence type="inferred from homology"/>
<dbReference type="EMBL" id="U44118">
    <property type="protein sequence ID" value="AAB05016.1"/>
    <property type="molecule type" value="Genomic_DNA"/>
</dbReference>
<dbReference type="RefSeq" id="WP_002553161.1">
    <property type="nucleotide sequence ID" value="NZ_VBUL01000015.1"/>
</dbReference>
<dbReference type="SMR" id="P0A160"/>
<dbReference type="GeneID" id="98112258"/>
<dbReference type="OMA" id="GRRKNVW"/>
<dbReference type="GO" id="GO:1990904">
    <property type="term" value="C:ribonucleoprotein complex"/>
    <property type="evidence" value="ECO:0007669"/>
    <property type="project" value="UniProtKB-KW"/>
</dbReference>
<dbReference type="GO" id="GO:0005840">
    <property type="term" value="C:ribosome"/>
    <property type="evidence" value="ECO:0007669"/>
    <property type="project" value="UniProtKB-KW"/>
</dbReference>
<dbReference type="GO" id="GO:0019843">
    <property type="term" value="F:rRNA binding"/>
    <property type="evidence" value="ECO:0007669"/>
    <property type="project" value="UniProtKB-UniRule"/>
</dbReference>
<dbReference type="GO" id="GO:0003735">
    <property type="term" value="F:structural constituent of ribosome"/>
    <property type="evidence" value="ECO:0007669"/>
    <property type="project" value="InterPro"/>
</dbReference>
<dbReference type="GO" id="GO:0000027">
    <property type="term" value="P:ribosomal large subunit assembly"/>
    <property type="evidence" value="ECO:0007669"/>
    <property type="project" value="UniProtKB-UniRule"/>
</dbReference>
<dbReference type="GO" id="GO:0006412">
    <property type="term" value="P:translation"/>
    <property type="evidence" value="ECO:0007669"/>
    <property type="project" value="InterPro"/>
</dbReference>
<dbReference type="CDD" id="cd07026">
    <property type="entry name" value="Ribosomal_L20"/>
    <property type="match status" value="1"/>
</dbReference>
<dbReference type="FunFam" id="1.10.1900.20:FF:000001">
    <property type="entry name" value="50S ribosomal protein L20"/>
    <property type="match status" value="1"/>
</dbReference>
<dbReference type="Gene3D" id="6.10.160.10">
    <property type="match status" value="1"/>
</dbReference>
<dbReference type="Gene3D" id="1.10.1900.20">
    <property type="entry name" value="Ribosomal protein L20"/>
    <property type="match status" value="1"/>
</dbReference>
<dbReference type="HAMAP" id="MF_00382">
    <property type="entry name" value="Ribosomal_bL20"/>
    <property type="match status" value="1"/>
</dbReference>
<dbReference type="InterPro" id="IPR005813">
    <property type="entry name" value="Ribosomal_bL20"/>
</dbReference>
<dbReference type="InterPro" id="IPR049946">
    <property type="entry name" value="RIBOSOMAL_L20_CS"/>
</dbReference>
<dbReference type="InterPro" id="IPR035566">
    <property type="entry name" value="Ribosomal_protein_bL20_C"/>
</dbReference>
<dbReference type="NCBIfam" id="TIGR01032">
    <property type="entry name" value="rplT_bact"/>
    <property type="match status" value="1"/>
</dbReference>
<dbReference type="PANTHER" id="PTHR10986">
    <property type="entry name" value="39S RIBOSOMAL PROTEIN L20"/>
    <property type="match status" value="1"/>
</dbReference>
<dbReference type="Pfam" id="PF00453">
    <property type="entry name" value="Ribosomal_L20"/>
    <property type="match status" value="1"/>
</dbReference>
<dbReference type="PRINTS" id="PR00062">
    <property type="entry name" value="RIBOSOMALL20"/>
</dbReference>
<dbReference type="SUPFAM" id="SSF74731">
    <property type="entry name" value="Ribosomal protein L20"/>
    <property type="match status" value="1"/>
</dbReference>
<dbReference type="PROSITE" id="PS00937">
    <property type="entry name" value="RIBOSOMAL_L20"/>
    <property type="match status" value="1"/>
</dbReference>
<evidence type="ECO:0000250" key="1"/>
<evidence type="ECO:0000305" key="2"/>
<reference key="1">
    <citation type="journal article" date="1996" name="J. Bacteriol.">
        <title>Suppression of a sensor kinase-dependent phenotype in Pseudomonas syringae by ribosomal proteins L35 and L20.</title>
        <authorList>
            <person name="Kitten T."/>
            <person name="Willis D.K."/>
        </authorList>
    </citation>
    <scope>NUCLEOTIDE SEQUENCE [GENOMIC DNA]</scope>
    <source>
        <strain>SUPP27</strain>
    </source>
</reference>
<organism>
    <name type="scientific">Pseudomonas syringae pv. syringae</name>
    <dbReference type="NCBI Taxonomy" id="321"/>
    <lineage>
        <taxon>Bacteria</taxon>
        <taxon>Pseudomonadati</taxon>
        <taxon>Pseudomonadota</taxon>
        <taxon>Gammaproteobacteria</taxon>
        <taxon>Pseudomonadales</taxon>
        <taxon>Pseudomonadaceae</taxon>
        <taxon>Pseudomonas</taxon>
        <taxon>Pseudomonas syringae</taxon>
    </lineage>
</organism>
<protein>
    <recommendedName>
        <fullName evidence="2">Large ribosomal subunit protein bL20</fullName>
    </recommendedName>
    <alternativeName>
        <fullName>50S ribosomal protein L20</fullName>
    </alternativeName>
</protein>
<accession>P0A160</accession>
<accession>P52828</accession>
<sequence>MARVKRGVIARKRHKKILKLAKGYYGARSRVFRVAKQAVIKAGQYAYRDRRQKKRQFRALWIARINAGARVNGLSYSRFIAGLKKASIEIDRKVLADLAVNEKAAFAAIVEKAKATLA</sequence>
<comment type="function">
    <text evidence="1">Binds directly to 23S ribosomal RNA and is necessary for the in vitro assembly process of the 50S ribosomal subunit. It is not involved in the protein synthesizing functions of that subunit (By similarity).</text>
</comment>
<comment type="similarity">
    <text evidence="2">Belongs to the bacterial ribosomal protein bL20 family.</text>
</comment>
<feature type="chain" id="PRO_0000177210" description="Large ribosomal subunit protein bL20">
    <location>
        <begin position="1"/>
        <end position="118"/>
    </location>
</feature>